<keyword id="KW-0963">Cytoplasm</keyword>
<keyword id="KW-0210">Decarboxylase</keyword>
<keyword id="KW-0456">Lyase</keyword>
<keyword id="KW-0627">Porphyrin biosynthesis</keyword>
<comment type="function">
    <text evidence="1">Catalyzes the decarboxylation of four acetate groups of uroporphyrinogen-III to yield coproporphyrinogen-III.</text>
</comment>
<comment type="catalytic activity">
    <reaction evidence="1">
        <text>uroporphyrinogen III + 4 H(+) = coproporphyrinogen III + 4 CO2</text>
        <dbReference type="Rhea" id="RHEA:19865"/>
        <dbReference type="ChEBI" id="CHEBI:15378"/>
        <dbReference type="ChEBI" id="CHEBI:16526"/>
        <dbReference type="ChEBI" id="CHEBI:57308"/>
        <dbReference type="ChEBI" id="CHEBI:57309"/>
        <dbReference type="EC" id="4.1.1.37"/>
    </reaction>
</comment>
<comment type="pathway">
    <text evidence="1">Porphyrin-containing compound metabolism; protoporphyrin-IX biosynthesis; coproporphyrinogen-III from 5-aminolevulinate: step 4/4.</text>
</comment>
<comment type="subunit">
    <text evidence="1">Homodimer.</text>
</comment>
<comment type="subcellular location">
    <subcellularLocation>
        <location evidence="1">Cytoplasm</location>
    </subcellularLocation>
</comment>
<comment type="similarity">
    <text evidence="1">Belongs to the uroporphyrinogen decarboxylase family.</text>
</comment>
<evidence type="ECO:0000255" key="1">
    <source>
        <dbReference type="HAMAP-Rule" id="MF_00218"/>
    </source>
</evidence>
<reference key="1">
    <citation type="submission" date="2008-12" db="EMBL/GenBank/DDBJ databases">
        <title>Complete sequence of Chloroflexus aggregans DSM 9485.</title>
        <authorList>
            <consortium name="US DOE Joint Genome Institute"/>
            <person name="Lucas S."/>
            <person name="Copeland A."/>
            <person name="Lapidus A."/>
            <person name="Glavina del Rio T."/>
            <person name="Dalin E."/>
            <person name="Tice H."/>
            <person name="Pitluck S."/>
            <person name="Foster B."/>
            <person name="Larimer F."/>
            <person name="Land M."/>
            <person name="Hauser L."/>
            <person name="Kyrpides N."/>
            <person name="Mikhailova N."/>
            <person name="Bryant D.A."/>
            <person name="Richardson P."/>
        </authorList>
    </citation>
    <scope>NUCLEOTIDE SEQUENCE [LARGE SCALE GENOMIC DNA]</scope>
    <source>
        <strain>MD-66 / DSM 9485</strain>
    </source>
</reference>
<feature type="chain" id="PRO_1000197513" description="Uroporphyrinogen decarboxylase">
    <location>
        <begin position="1"/>
        <end position="356"/>
    </location>
</feature>
<feature type="binding site" evidence="1">
    <location>
        <begin position="23"/>
        <end position="27"/>
    </location>
    <ligand>
        <name>substrate</name>
    </ligand>
</feature>
<feature type="binding site" evidence="1">
    <location>
        <position position="72"/>
    </location>
    <ligand>
        <name>substrate</name>
    </ligand>
</feature>
<feature type="binding site" evidence="1">
    <location>
        <position position="148"/>
    </location>
    <ligand>
        <name>substrate</name>
    </ligand>
</feature>
<feature type="binding site" evidence="1">
    <location>
        <position position="203"/>
    </location>
    <ligand>
        <name>substrate</name>
    </ligand>
</feature>
<feature type="binding site" evidence="1">
    <location>
        <position position="321"/>
    </location>
    <ligand>
        <name>substrate</name>
    </ligand>
</feature>
<feature type="site" description="Transition state stabilizer" evidence="1">
    <location>
        <position position="72"/>
    </location>
</feature>
<name>DCUP_CHLAD</name>
<accession>B8G821</accession>
<protein>
    <recommendedName>
        <fullName evidence="1">Uroporphyrinogen decarboxylase</fullName>
        <shortName evidence="1">UPD</shortName>
        <shortName evidence="1">URO-D</shortName>
        <ecNumber evidence="1">4.1.1.37</ecNumber>
    </recommendedName>
</protein>
<dbReference type="EC" id="4.1.1.37" evidence="1"/>
<dbReference type="EMBL" id="CP001337">
    <property type="protein sequence ID" value="ACL24200.1"/>
    <property type="molecule type" value="Genomic_DNA"/>
</dbReference>
<dbReference type="RefSeq" id="WP_012616564.1">
    <property type="nucleotide sequence ID" value="NC_011831.1"/>
</dbReference>
<dbReference type="SMR" id="B8G821"/>
<dbReference type="STRING" id="326427.Cagg_1292"/>
<dbReference type="KEGG" id="cag:Cagg_1292"/>
<dbReference type="eggNOG" id="COG0407">
    <property type="taxonomic scope" value="Bacteria"/>
</dbReference>
<dbReference type="HOGENOM" id="CLU_040933_0_1_0"/>
<dbReference type="OrthoDB" id="9780425at2"/>
<dbReference type="UniPathway" id="UPA00251">
    <property type="reaction ID" value="UER00321"/>
</dbReference>
<dbReference type="Proteomes" id="UP000002508">
    <property type="component" value="Chromosome"/>
</dbReference>
<dbReference type="GO" id="GO:0005829">
    <property type="term" value="C:cytosol"/>
    <property type="evidence" value="ECO:0007669"/>
    <property type="project" value="TreeGrafter"/>
</dbReference>
<dbReference type="GO" id="GO:0004853">
    <property type="term" value="F:uroporphyrinogen decarboxylase activity"/>
    <property type="evidence" value="ECO:0007669"/>
    <property type="project" value="UniProtKB-UniRule"/>
</dbReference>
<dbReference type="GO" id="GO:0006782">
    <property type="term" value="P:protoporphyrinogen IX biosynthetic process"/>
    <property type="evidence" value="ECO:0007669"/>
    <property type="project" value="UniProtKB-UniRule"/>
</dbReference>
<dbReference type="CDD" id="cd00717">
    <property type="entry name" value="URO-D"/>
    <property type="match status" value="1"/>
</dbReference>
<dbReference type="FunFam" id="3.20.20.210:FF:000008">
    <property type="entry name" value="Uroporphyrinogen decarboxylase"/>
    <property type="match status" value="1"/>
</dbReference>
<dbReference type="Gene3D" id="3.20.20.210">
    <property type="match status" value="1"/>
</dbReference>
<dbReference type="HAMAP" id="MF_00218">
    <property type="entry name" value="URO_D"/>
    <property type="match status" value="1"/>
</dbReference>
<dbReference type="InterPro" id="IPR038071">
    <property type="entry name" value="UROD/MetE-like_sf"/>
</dbReference>
<dbReference type="InterPro" id="IPR006361">
    <property type="entry name" value="Uroporphyrinogen_deCO2ase_HemE"/>
</dbReference>
<dbReference type="InterPro" id="IPR000257">
    <property type="entry name" value="Uroporphyrinogen_deCOase"/>
</dbReference>
<dbReference type="NCBIfam" id="TIGR01464">
    <property type="entry name" value="hemE"/>
    <property type="match status" value="1"/>
</dbReference>
<dbReference type="PANTHER" id="PTHR21091">
    <property type="entry name" value="METHYLTETRAHYDROFOLATE:HOMOCYSTEINE METHYLTRANSFERASE RELATED"/>
    <property type="match status" value="1"/>
</dbReference>
<dbReference type="PANTHER" id="PTHR21091:SF169">
    <property type="entry name" value="UROPORPHYRINOGEN DECARBOXYLASE"/>
    <property type="match status" value="1"/>
</dbReference>
<dbReference type="Pfam" id="PF01208">
    <property type="entry name" value="URO-D"/>
    <property type="match status" value="1"/>
</dbReference>
<dbReference type="SUPFAM" id="SSF51726">
    <property type="entry name" value="UROD/MetE-like"/>
    <property type="match status" value="1"/>
</dbReference>
<dbReference type="PROSITE" id="PS00906">
    <property type="entry name" value="UROD_1"/>
    <property type="match status" value="1"/>
</dbReference>
<dbReference type="PROSITE" id="PS00907">
    <property type="entry name" value="UROD_2"/>
    <property type="match status" value="1"/>
</dbReference>
<gene>
    <name evidence="1" type="primary">hemE</name>
    <name type="ordered locus">Cagg_1292</name>
</gene>
<proteinExistence type="inferred from homology"/>
<sequence length="356" mass="39698">MRDRFLRACRRQPVDRTPIWLMRQAGRYMPEYRAVRERYGFLQMVKTPEIAAEVTLQPIAAFGVDAAIIFADILPPLEGLGLRLTYEKGEGPVIHNPIRHPHDVATLHPCDPRETVAYTLDAVRLVKRELNGLPLIGFSGAPFTLASYAIEGGGSKEYRLTKRFMYEQPTAWHDLMERLGTLVAEYLIAQVEAGADAVQIFDSWAGTLAPADYRAYVLRHTQNVVATVRARLGAAAPPIIYFGTDMAGLAGELRQLGTDVLGVDWRIDLDVAWAQYGYEHAVQGNLDPMTLFAPPELIASRAREILQRAGGRPGHIFNLGHGILTETPVEHVRYLVEFVQSYPLPTTTPALQEVMQ</sequence>
<organism>
    <name type="scientific">Chloroflexus aggregans (strain MD-66 / DSM 9485)</name>
    <dbReference type="NCBI Taxonomy" id="326427"/>
    <lineage>
        <taxon>Bacteria</taxon>
        <taxon>Bacillati</taxon>
        <taxon>Chloroflexota</taxon>
        <taxon>Chloroflexia</taxon>
        <taxon>Chloroflexales</taxon>
        <taxon>Chloroflexineae</taxon>
        <taxon>Chloroflexaceae</taxon>
        <taxon>Chloroflexus</taxon>
    </lineage>
</organism>